<dbReference type="EC" id="3.4.24.-"/>
<dbReference type="EMBL" id="JQ829079">
    <property type="protein sequence ID" value="AFY07204.1"/>
    <property type="molecule type" value="mRNA"/>
</dbReference>
<dbReference type="SMR" id="K7Z9Q9"/>
<dbReference type="GO" id="GO:0005576">
    <property type="term" value="C:extracellular region"/>
    <property type="evidence" value="ECO:0007669"/>
    <property type="project" value="UniProtKB-SubCell"/>
</dbReference>
<dbReference type="GO" id="GO:0042151">
    <property type="term" value="C:nematocyst"/>
    <property type="evidence" value="ECO:0007669"/>
    <property type="project" value="UniProtKB-SubCell"/>
</dbReference>
<dbReference type="GO" id="GO:0004222">
    <property type="term" value="F:metalloendopeptidase activity"/>
    <property type="evidence" value="ECO:0007669"/>
    <property type="project" value="InterPro"/>
</dbReference>
<dbReference type="GO" id="GO:0090729">
    <property type="term" value="F:toxin activity"/>
    <property type="evidence" value="ECO:0007669"/>
    <property type="project" value="UniProtKB-KW"/>
</dbReference>
<dbReference type="GO" id="GO:0008270">
    <property type="term" value="F:zinc ion binding"/>
    <property type="evidence" value="ECO:0007669"/>
    <property type="project" value="InterPro"/>
</dbReference>
<dbReference type="GO" id="GO:0006508">
    <property type="term" value="P:proteolysis"/>
    <property type="evidence" value="ECO:0007669"/>
    <property type="project" value="UniProtKB-KW"/>
</dbReference>
<dbReference type="CDD" id="cd04280">
    <property type="entry name" value="ZnMc_astacin_like"/>
    <property type="match status" value="1"/>
</dbReference>
<dbReference type="FunFam" id="3.40.390.10:FF:000185">
    <property type="match status" value="1"/>
</dbReference>
<dbReference type="Gene3D" id="3.40.390.10">
    <property type="entry name" value="Collagenase (Catalytic Domain)"/>
    <property type="match status" value="1"/>
</dbReference>
<dbReference type="InterPro" id="IPR034035">
    <property type="entry name" value="Astacin-like_dom"/>
</dbReference>
<dbReference type="InterPro" id="IPR024079">
    <property type="entry name" value="MetalloPept_cat_dom_sf"/>
</dbReference>
<dbReference type="InterPro" id="IPR001506">
    <property type="entry name" value="Peptidase_M12A"/>
</dbReference>
<dbReference type="InterPro" id="IPR006026">
    <property type="entry name" value="Peptidase_Metallo"/>
</dbReference>
<dbReference type="PANTHER" id="PTHR10127">
    <property type="entry name" value="DISCOIDIN, CUB, EGF, LAMININ , AND ZINC METALLOPROTEASE DOMAIN CONTAINING"/>
    <property type="match status" value="1"/>
</dbReference>
<dbReference type="PANTHER" id="PTHR10127:SF861">
    <property type="entry name" value="DORSAL-VENTRAL PATTERNING PROTEIN TOLLOID-RELATED"/>
    <property type="match status" value="1"/>
</dbReference>
<dbReference type="Pfam" id="PF01400">
    <property type="entry name" value="Astacin"/>
    <property type="match status" value="1"/>
</dbReference>
<dbReference type="PRINTS" id="PR00480">
    <property type="entry name" value="ASTACIN"/>
</dbReference>
<dbReference type="SMART" id="SM00235">
    <property type="entry name" value="ZnMc"/>
    <property type="match status" value="1"/>
</dbReference>
<dbReference type="SUPFAM" id="SSF55486">
    <property type="entry name" value="Metalloproteases ('zincins'), catalytic domain"/>
    <property type="match status" value="1"/>
</dbReference>
<dbReference type="PROSITE" id="PS51864">
    <property type="entry name" value="ASTACIN"/>
    <property type="match status" value="1"/>
</dbReference>
<dbReference type="PROSITE" id="PS00142">
    <property type="entry name" value="ZINC_PROTEASE"/>
    <property type="match status" value="1"/>
</dbReference>
<sequence length="287" mass="32594">MKGFIFAGVLVSALICLAEGKPFDNLELVEDDMLMTKEQKEAYLAHQNGRVRRAALRDRYLWPQGKIPYTFSDDIDQAGRELAERAMNHWMSRTCLRFSPRRREHAYIEFQYDGRCRARVGYTGEARQKVSIGSALDPCPLGSVIHELGHGIGFFHEHSRPDRDEYVNINVNNMREGAESNFRKDNGYFVDSRGQDYDYGSIMHYSKYQGNNAFNAVVMEPIQRGAEIGQRDGLSAGDIRQTNLMYKCNAQGDSELQPVNDEDEDKDGGDSKKKPDPKGPKPGEIEE</sequence>
<organism>
    <name type="scientific">Nematostella vectensis</name>
    <name type="common">Starlet sea anemone</name>
    <dbReference type="NCBI Taxonomy" id="45351"/>
    <lineage>
        <taxon>Eukaryota</taxon>
        <taxon>Metazoa</taxon>
        <taxon>Cnidaria</taxon>
        <taxon>Anthozoa</taxon>
        <taxon>Hexacorallia</taxon>
        <taxon>Actiniaria</taxon>
        <taxon>Edwardsiidae</taxon>
        <taxon>Nematostella</taxon>
    </lineage>
</organism>
<reference key="1">
    <citation type="journal article" date="2013" name="Mar. Biotechnol.">
        <title>Analysis of soluble protein contents from the nematocysts of a model sea anemone sheds light on venom evolution.</title>
        <authorList>
            <person name="Moran Y."/>
            <person name="Praher D."/>
            <person name="Schlesinger A."/>
            <person name="Ayalon A."/>
            <person name="Tal Y."/>
            <person name="Technau U."/>
        </authorList>
    </citation>
    <scope>NUCLEOTIDE SEQUENCE [MRNA]</scope>
    <scope>SUBCELLULAR LOCATION</scope>
    <scope>TISSUE SPECIFICITY</scope>
    <scope>DEVELOPMENTAL STAGE</scope>
</reference>
<feature type="signal peptide" evidence="3">
    <location>
        <begin position="1"/>
        <end position="20"/>
    </location>
</feature>
<feature type="chain" id="PRO_0000423642" description="Nematocyst expressed protein 6" evidence="8">
    <location>
        <begin position="21"/>
        <end position="287"/>
    </location>
</feature>
<feature type="domain" description="Peptidase M12A" evidence="4">
    <location>
        <begin position="53"/>
        <end position="249"/>
    </location>
</feature>
<feature type="region of interest" description="Disordered" evidence="5">
    <location>
        <begin position="249"/>
        <end position="287"/>
    </location>
</feature>
<feature type="compositionally biased region" description="Basic and acidic residues" evidence="5">
    <location>
        <begin position="268"/>
        <end position="287"/>
    </location>
</feature>
<feature type="active site" evidence="4">
    <location>
        <position position="147"/>
    </location>
</feature>
<feature type="binding site" evidence="4">
    <location>
        <position position="146"/>
    </location>
    <ligand>
        <name>Zn(2+)</name>
        <dbReference type="ChEBI" id="CHEBI:29105"/>
        <note>catalytic</note>
    </ligand>
</feature>
<feature type="binding site" evidence="4">
    <location>
        <position position="150"/>
    </location>
    <ligand>
        <name>Zn(2+)</name>
        <dbReference type="ChEBI" id="CHEBI:29105"/>
        <note>catalytic</note>
    </ligand>
</feature>
<feature type="binding site" evidence="4">
    <location>
        <position position="156"/>
    </location>
    <ligand>
        <name>Zn(2+)</name>
        <dbReference type="ChEBI" id="CHEBI:29105"/>
        <note>catalytic</note>
    </ligand>
</feature>
<feature type="disulfide bond" evidence="4">
    <location>
        <begin position="95"/>
        <end position="248"/>
    </location>
</feature>
<feature type="disulfide bond" evidence="4">
    <location>
        <begin position="116"/>
        <end position="139"/>
    </location>
</feature>
<accession>K7Z9Q9</accession>
<name>VMP_NEMVE</name>
<comment type="function">
    <text evidence="1">Metalloprotease.</text>
</comment>
<comment type="cofactor">
    <cofactor evidence="4">
        <name>Zn(2+)</name>
        <dbReference type="ChEBI" id="CHEBI:29105"/>
    </cofactor>
    <text evidence="4">Binds 1 zinc ion per subunit.</text>
</comment>
<comment type="subcellular location">
    <subcellularLocation>
        <location evidence="6">Secreted</location>
    </subcellularLocation>
    <subcellularLocation>
        <location evidence="6">Nematocyst</location>
    </subcellularLocation>
</comment>
<comment type="tissue specificity">
    <text evidence="6">Nematocyte and pharyngeal gland.</text>
</comment>
<comment type="developmental stage">
    <text evidence="6">Expressed in the early planula stage of Nematostella in single cells of the ectoderm. These cells are thin and elongated as would be expected of developing nematocytes. In the later stages, the expression expands to an additional domain of large thick cells in the pharynx. The size and richness of vesicles suggest that these cells are not nematocytes but gland cells, and in the polyp stage, they become the major expression domain of this protein.</text>
</comment>
<evidence type="ECO:0000250" key="1"/>
<evidence type="ECO:0000250" key="2">
    <source>
        <dbReference type="UniProtKB" id="A7RJ12"/>
    </source>
</evidence>
<evidence type="ECO:0000255" key="3"/>
<evidence type="ECO:0000255" key="4">
    <source>
        <dbReference type="PROSITE-ProRule" id="PRU01211"/>
    </source>
</evidence>
<evidence type="ECO:0000256" key="5">
    <source>
        <dbReference type="SAM" id="MobiDB-lite"/>
    </source>
</evidence>
<evidence type="ECO:0000269" key="6">
    <source>
    </source>
</evidence>
<evidence type="ECO:0000303" key="7">
    <source>
    </source>
</evidence>
<evidence type="ECO:0000305" key="8"/>
<proteinExistence type="evidence at transcript level"/>
<keyword id="KW-1015">Disulfide bond</keyword>
<keyword id="KW-0378">Hydrolase</keyword>
<keyword id="KW-0479">Metal-binding</keyword>
<keyword id="KW-0482">Metalloprotease</keyword>
<keyword id="KW-0166">Nematocyst</keyword>
<keyword id="KW-0645">Protease</keyword>
<keyword id="KW-0964">Secreted</keyword>
<keyword id="KW-0732">Signal</keyword>
<keyword id="KW-0800">Toxin</keyword>
<keyword id="KW-0862">Zinc</keyword>
<protein>
    <recommendedName>
        <fullName evidence="7">Nematocyst expressed protein 6</fullName>
        <shortName evidence="7">NEP-6</shortName>
        <shortName evidence="2 8">NEP6</shortName>
        <ecNumber>3.4.24.-</ecNumber>
    </recommendedName>
    <alternativeName>
        <fullName evidence="8">Astacin-like metalloprotease toxin</fullName>
    </alternativeName>
</protein>